<gene>
    <name type="primary">Vps36</name>
    <name type="ORF">CG10711</name>
</gene>
<accession>Q9VU87</accession>
<accession>Q8MSB7</accession>
<organism>
    <name type="scientific">Drosophila melanogaster</name>
    <name type="common">Fruit fly</name>
    <dbReference type="NCBI Taxonomy" id="7227"/>
    <lineage>
        <taxon>Eukaryota</taxon>
        <taxon>Metazoa</taxon>
        <taxon>Ecdysozoa</taxon>
        <taxon>Arthropoda</taxon>
        <taxon>Hexapoda</taxon>
        <taxon>Insecta</taxon>
        <taxon>Pterygota</taxon>
        <taxon>Neoptera</taxon>
        <taxon>Endopterygota</taxon>
        <taxon>Diptera</taxon>
        <taxon>Brachycera</taxon>
        <taxon>Muscomorpha</taxon>
        <taxon>Ephydroidea</taxon>
        <taxon>Drosophilidae</taxon>
        <taxon>Drosophila</taxon>
        <taxon>Sophophora</taxon>
    </lineage>
</organism>
<protein>
    <recommendedName>
        <fullName>Vacuolar protein-sorting-associated protein 36</fullName>
    </recommendedName>
    <alternativeName>
        <fullName>ESCRT-II complex subunit VPS36</fullName>
    </alternativeName>
</protein>
<name>VPS36_DROME</name>
<feature type="chain" id="PRO_0000390363" description="Vacuolar protein-sorting-associated protein 36">
    <location>
        <begin position="1"/>
        <end position="399"/>
    </location>
</feature>
<feature type="domain" description="GLUE N-terminal" evidence="3">
    <location>
        <begin position="1"/>
        <end position="94"/>
    </location>
</feature>
<feature type="domain" description="GLUE C-terminal" evidence="3">
    <location>
        <begin position="111"/>
        <end position="144"/>
    </location>
</feature>
<evidence type="ECO:0000250" key="1"/>
<evidence type="ECO:0000250" key="2">
    <source>
        <dbReference type="UniProtKB" id="Q06696"/>
    </source>
</evidence>
<evidence type="ECO:0000255" key="3">
    <source>
        <dbReference type="PROSITE-ProRule" id="PRU00828"/>
    </source>
</evidence>
<evidence type="ECO:0000269" key="4">
    <source>
    </source>
</evidence>
<evidence type="ECO:0000269" key="5">
    <source>
    </source>
</evidence>
<evidence type="ECO:0000269" key="6">
    <source>
    </source>
</evidence>
<evidence type="ECO:0000305" key="7"/>
<reference key="1">
    <citation type="journal article" date="2000" name="Science">
        <title>The genome sequence of Drosophila melanogaster.</title>
        <authorList>
            <person name="Adams M.D."/>
            <person name="Celniker S.E."/>
            <person name="Holt R.A."/>
            <person name="Evans C.A."/>
            <person name="Gocayne J.D."/>
            <person name="Amanatides P.G."/>
            <person name="Scherer S.E."/>
            <person name="Li P.W."/>
            <person name="Hoskins R.A."/>
            <person name="Galle R.F."/>
            <person name="George R.A."/>
            <person name="Lewis S.E."/>
            <person name="Richards S."/>
            <person name="Ashburner M."/>
            <person name="Henderson S.N."/>
            <person name="Sutton G.G."/>
            <person name="Wortman J.R."/>
            <person name="Yandell M.D."/>
            <person name="Zhang Q."/>
            <person name="Chen L.X."/>
            <person name="Brandon R.C."/>
            <person name="Rogers Y.-H.C."/>
            <person name="Blazej R.G."/>
            <person name="Champe M."/>
            <person name="Pfeiffer B.D."/>
            <person name="Wan K.H."/>
            <person name="Doyle C."/>
            <person name="Baxter E.G."/>
            <person name="Helt G."/>
            <person name="Nelson C.R."/>
            <person name="Miklos G.L.G."/>
            <person name="Abril J.F."/>
            <person name="Agbayani A."/>
            <person name="An H.-J."/>
            <person name="Andrews-Pfannkoch C."/>
            <person name="Baldwin D."/>
            <person name="Ballew R.M."/>
            <person name="Basu A."/>
            <person name="Baxendale J."/>
            <person name="Bayraktaroglu L."/>
            <person name="Beasley E.M."/>
            <person name="Beeson K.Y."/>
            <person name="Benos P.V."/>
            <person name="Berman B.P."/>
            <person name="Bhandari D."/>
            <person name="Bolshakov S."/>
            <person name="Borkova D."/>
            <person name="Botchan M.R."/>
            <person name="Bouck J."/>
            <person name="Brokstein P."/>
            <person name="Brottier P."/>
            <person name="Burtis K.C."/>
            <person name="Busam D.A."/>
            <person name="Butler H."/>
            <person name="Cadieu E."/>
            <person name="Center A."/>
            <person name="Chandra I."/>
            <person name="Cherry J.M."/>
            <person name="Cawley S."/>
            <person name="Dahlke C."/>
            <person name="Davenport L.B."/>
            <person name="Davies P."/>
            <person name="de Pablos B."/>
            <person name="Delcher A."/>
            <person name="Deng Z."/>
            <person name="Mays A.D."/>
            <person name="Dew I."/>
            <person name="Dietz S.M."/>
            <person name="Dodson K."/>
            <person name="Doup L.E."/>
            <person name="Downes M."/>
            <person name="Dugan-Rocha S."/>
            <person name="Dunkov B.C."/>
            <person name="Dunn P."/>
            <person name="Durbin K.J."/>
            <person name="Evangelista C.C."/>
            <person name="Ferraz C."/>
            <person name="Ferriera S."/>
            <person name="Fleischmann W."/>
            <person name="Fosler C."/>
            <person name="Gabrielian A.E."/>
            <person name="Garg N.S."/>
            <person name="Gelbart W.M."/>
            <person name="Glasser K."/>
            <person name="Glodek A."/>
            <person name="Gong F."/>
            <person name="Gorrell J.H."/>
            <person name="Gu Z."/>
            <person name="Guan P."/>
            <person name="Harris M."/>
            <person name="Harris N.L."/>
            <person name="Harvey D.A."/>
            <person name="Heiman T.J."/>
            <person name="Hernandez J.R."/>
            <person name="Houck J."/>
            <person name="Hostin D."/>
            <person name="Houston K.A."/>
            <person name="Howland T.J."/>
            <person name="Wei M.-H."/>
            <person name="Ibegwam C."/>
            <person name="Jalali M."/>
            <person name="Kalush F."/>
            <person name="Karpen G.H."/>
            <person name="Ke Z."/>
            <person name="Kennison J.A."/>
            <person name="Ketchum K.A."/>
            <person name="Kimmel B.E."/>
            <person name="Kodira C.D."/>
            <person name="Kraft C.L."/>
            <person name="Kravitz S."/>
            <person name="Kulp D."/>
            <person name="Lai Z."/>
            <person name="Lasko P."/>
            <person name="Lei Y."/>
            <person name="Levitsky A.A."/>
            <person name="Li J.H."/>
            <person name="Li Z."/>
            <person name="Liang Y."/>
            <person name="Lin X."/>
            <person name="Liu X."/>
            <person name="Mattei B."/>
            <person name="McIntosh T.C."/>
            <person name="McLeod M.P."/>
            <person name="McPherson D."/>
            <person name="Merkulov G."/>
            <person name="Milshina N.V."/>
            <person name="Mobarry C."/>
            <person name="Morris J."/>
            <person name="Moshrefi A."/>
            <person name="Mount S.M."/>
            <person name="Moy M."/>
            <person name="Murphy B."/>
            <person name="Murphy L."/>
            <person name="Muzny D.M."/>
            <person name="Nelson D.L."/>
            <person name="Nelson D.R."/>
            <person name="Nelson K.A."/>
            <person name="Nixon K."/>
            <person name="Nusskern D.R."/>
            <person name="Pacleb J.M."/>
            <person name="Palazzolo M."/>
            <person name="Pittman G.S."/>
            <person name="Pan S."/>
            <person name="Pollard J."/>
            <person name="Puri V."/>
            <person name="Reese M.G."/>
            <person name="Reinert K."/>
            <person name="Remington K."/>
            <person name="Saunders R.D.C."/>
            <person name="Scheeler F."/>
            <person name="Shen H."/>
            <person name="Shue B.C."/>
            <person name="Siden-Kiamos I."/>
            <person name="Simpson M."/>
            <person name="Skupski M.P."/>
            <person name="Smith T.J."/>
            <person name="Spier E."/>
            <person name="Spradling A.C."/>
            <person name="Stapleton M."/>
            <person name="Strong R."/>
            <person name="Sun E."/>
            <person name="Svirskas R."/>
            <person name="Tector C."/>
            <person name="Turner R."/>
            <person name="Venter E."/>
            <person name="Wang A.H."/>
            <person name="Wang X."/>
            <person name="Wang Z.-Y."/>
            <person name="Wassarman D.A."/>
            <person name="Weinstock G.M."/>
            <person name="Weissenbach J."/>
            <person name="Williams S.M."/>
            <person name="Woodage T."/>
            <person name="Worley K.C."/>
            <person name="Wu D."/>
            <person name="Yang S."/>
            <person name="Yao Q.A."/>
            <person name="Ye J."/>
            <person name="Yeh R.-F."/>
            <person name="Zaveri J.S."/>
            <person name="Zhan M."/>
            <person name="Zhang G."/>
            <person name="Zhao Q."/>
            <person name="Zheng L."/>
            <person name="Zheng X.H."/>
            <person name="Zhong F.N."/>
            <person name="Zhong W."/>
            <person name="Zhou X."/>
            <person name="Zhu S.C."/>
            <person name="Zhu X."/>
            <person name="Smith H.O."/>
            <person name="Gibbs R.A."/>
            <person name="Myers E.W."/>
            <person name="Rubin G.M."/>
            <person name="Venter J.C."/>
        </authorList>
    </citation>
    <scope>NUCLEOTIDE SEQUENCE [LARGE SCALE GENOMIC DNA]</scope>
    <source>
        <strain>Berkeley</strain>
    </source>
</reference>
<reference key="2">
    <citation type="journal article" date="2002" name="Genome Biol.">
        <title>Annotation of the Drosophila melanogaster euchromatic genome: a systematic review.</title>
        <authorList>
            <person name="Misra S."/>
            <person name="Crosby M.A."/>
            <person name="Mungall C.J."/>
            <person name="Matthews B.B."/>
            <person name="Campbell K.S."/>
            <person name="Hradecky P."/>
            <person name="Huang Y."/>
            <person name="Kaminker J.S."/>
            <person name="Millburn G.H."/>
            <person name="Prochnik S.E."/>
            <person name="Smith C.D."/>
            <person name="Tupy J.L."/>
            <person name="Whitfield E.J."/>
            <person name="Bayraktaroglu L."/>
            <person name="Berman B.P."/>
            <person name="Bettencourt B.R."/>
            <person name="Celniker S.E."/>
            <person name="de Grey A.D.N.J."/>
            <person name="Drysdale R.A."/>
            <person name="Harris N.L."/>
            <person name="Richter J."/>
            <person name="Russo S."/>
            <person name="Schroeder A.J."/>
            <person name="Shu S.Q."/>
            <person name="Stapleton M."/>
            <person name="Yamada C."/>
            <person name="Ashburner M."/>
            <person name="Gelbart W.M."/>
            <person name="Rubin G.M."/>
            <person name="Lewis S.E."/>
        </authorList>
    </citation>
    <scope>GENOME REANNOTATION</scope>
    <source>
        <strain>Berkeley</strain>
    </source>
</reference>
<reference key="3">
    <citation type="journal article" date="2002" name="Genome Biol.">
        <title>A Drosophila full-length cDNA resource.</title>
        <authorList>
            <person name="Stapleton M."/>
            <person name="Carlson J.W."/>
            <person name="Brokstein P."/>
            <person name="Yu C."/>
            <person name="Champe M."/>
            <person name="George R.A."/>
            <person name="Guarin H."/>
            <person name="Kronmiller B."/>
            <person name="Pacleb J.M."/>
            <person name="Park S."/>
            <person name="Wan K.H."/>
            <person name="Rubin G.M."/>
            <person name="Celniker S.E."/>
        </authorList>
    </citation>
    <scope>NUCLEOTIDE SEQUENCE [LARGE SCALE MRNA]</scope>
    <source>
        <strain>Berkeley</strain>
        <tissue>Embryo</tissue>
    </source>
</reference>
<reference key="4">
    <citation type="submission" date="2008-09" db="EMBL/GenBank/DDBJ databases">
        <authorList>
            <person name="Carlson J.W."/>
            <person name="Booth B."/>
            <person name="Frise E."/>
            <person name="Park S."/>
            <person name="Wan K.H."/>
            <person name="Yu C."/>
            <person name="Celniker S.E."/>
        </authorList>
    </citation>
    <scope>NUCLEOTIDE SEQUENCE [LARGE SCALE MRNA]</scope>
</reference>
<reference key="5">
    <citation type="journal article" date="2007" name="Nature">
        <title>bicoid RNA localization requires specific binding of an endosomal sorting complex.</title>
        <authorList>
            <person name="Irion U."/>
            <person name="St Johnston D."/>
        </authorList>
    </citation>
    <scope>FUNCTION</scope>
    <scope>SUBCELLULAR LOCATION</scope>
    <scope>TISSUE SPECIFICITY</scope>
    <scope>DEVELOPMENTAL STAGE</scope>
    <scope>DOMAIN</scope>
    <scope>DISRUPTION PHENOTYPE</scope>
</reference>
<reference key="6">
    <citation type="journal article" date="2009" name="PLoS ONE">
        <title>Common and distinct genetic properties of ESCRT-II components in Drosophila.</title>
        <authorList>
            <person name="Herz H.M."/>
            <person name="Woodfield S.E."/>
            <person name="Chen Z."/>
            <person name="Bolduc C."/>
            <person name="Bergmann A."/>
        </authorList>
    </citation>
    <scope>FUNCTION</scope>
    <scope>DISRUPTION PHENOTYPE</scope>
</reference>
<reference key="7">
    <citation type="journal article" date="2018" name="Curr. Biol.">
        <title>Vps13D Encodes a Ubiquitin-Binding Protein that Is Required for the Regulation of Mitochondrial Size and Clearance.</title>
        <authorList>
            <person name="Anding A.L."/>
            <person name="Wang C."/>
            <person name="Chang T.K."/>
            <person name="Sliter D.A."/>
            <person name="Powers C.M."/>
            <person name="Hofmann K."/>
            <person name="Youle R.J."/>
            <person name="Baehrecke E.H."/>
        </authorList>
    </citation>
    <scope>FUNCTION</scope>
</reference>
<sequence length="399" mass="44214">MNRFAYVEARLSPNESFVSRDNRVKIYDGDQKTDFEDGEVVLTTHRLFWGRPGEIARAAVTLCLPLSYVISVSEETTASNFFGRKTRIIMHLHPPTSDKGPGPLDTSRATHIKLSGKNGLSVEFHSALRETLNARVWEILLTSEIIINGVASSPTLEPANDRLARIQKRTGIGGIERHLEAKAKATDENIALAFQDLSVLMAMAKDMVGVSKTISSKIRKQKGEISDDETVRFKSYLMSLGIDDPVTRDNFTSNSAYFSSLARQICEMLLDPIEEQGGMMSLADVYCRVNRARGLELLSPEDLLHACEQLSGPIRLRSFPSGARVLQLESHDDALIAVDTLEKVEAAESLAVEELAKQLGISLLLAKERLLVAERLGKVCRDESVEGLRFYPNLLLGRD</sequence>
<keyword id="KW-0963">Cytoplasm</keyword>
<keyword id="KW-0509">mRNA transport</keyword>
<keyword id="KW-0653">Protein transport</keyword>
<keyword id="KW-1185">Reference proteome</keyword>
<keyword id="KW-0694">RNA-binding</keyword>
<keyword id="KW-0813">Transport</keyword>
<proteinExistence type="evidence at transcript level"/>
<comment type="function">
    <text evidence="2 4 5 6">Component of the ESCRT-II complex (endosomal sorting complex required for transport II), which is required for multivesicular body (MVB) formation and sorting of endosomal cargo proteins into MVBs (PubMed:19132102). The MVB pathway mediates delivery of transmembrane proteins into the lumen of the lysosome for degradation (PubMed:19132102). The ESCRT-II complex is probably involved in the recruitment of the ESCRT-III complex (By similarity). ESCRT-II interacts, through the Vps36 subunit, with bicoid mRNA (PubMed:17268469). This interaction is required for the anterior localization of bicoid mRNA in the developing egg (PubMed:17268469). Plays a role in promoting mitochondrial autophagy (mitophagy) (PubMed:29307555).</text>
</comment>
<comment type="subunit">
    <text evidence="1">Component of the endosomal sorting complex required for transport II (ESCRT-II).</text>
</comment>
<comment type="subcellular location">
    <subcellularLocation>
        <location evidence="4">Cytoplasm</location>
    </subcellularLocation>
</comment>
<comment type="tissue specificity">
    <text evidence="4">Ubiquitously expressed in the ovary.</text>
</comment>
<comment type="developmental stage">
    <text evidence="4">Localizes to the anterior cortex of the oocyte in the same region as bicoid mRNA from stage 10B/11 of oogenesis.</text>
</comment>
<comment type="domain">
    <text evidence="4">The GLUE domain (GRAM-like ubiquitin-binding in EAP45) mediates the binding to the 3' UTR of bicoid mRNA.</text>
</comment>
<comment type="disruption phenotype">
    <text evidence="4 5">Multivesicular body sorting defects, with large amounts of ubiquitinated proteins detected on endosomes (PubMed:19132102). Bicoid mRNA is mislocalized in developing eggs (PubMed:17268469).</text>
</comment>
<comment type="similarity">
    <text evidence="7">Belongs to the VPS36 family.</text>
</comment>
<dbReference type="EMBL" id="AE014296">
    <property type="protein sequence ID" value="AAF49802.2"/>
    <property type="molecule type" value="Genomic_DNA"/>
</dbReference>
<dbReference type="EMBL" id="AY118941">
    <property type="protein sequence ID" value="AAM50801.1"/>
    <property type="molecule type" value="mRNA"/>
</dbReference>
<dbReference type="EMBL" id="BT044237">
    <property type="protein sequence ID" value="ACH92302.1"/>
    <property type="molecule type" value="mRNA"/>
</dbReference>
<dbReference type="RefSeq" id="NP_648660.1">
    <property type="nucleotide sequence ID" value="NM_140403.2"/>
</dbReference>
<dbReference type="SMR" id="Q9VU87"/>
<dbReference type="BioGRID" id="64866">
    <property type="interactions" value="9"/>
</dbReference>
<dbReference type="ComplexPortal" id="CPX-2458">
    <property type="entry name" value="ESCRT-II complex"/>
</dbReference>
<dbReference type="FunCoup" id="Q9VU87">
    <property type="interactions" value="1607"/>
</dbReference>
<dbReference type="IntAct" id="Q9VU87">
    <property type="interactions" value="1"/>
</dbReference>
<dbReference type="STRING" id="7227.FBpp0075560"/>
<dbReference type="MoonProt" id="Q9VU87"/>
<dbReference type="PaxDb" id="7227-FBpp0075560"/>
<dbReference type="DNASU" id="39523"/>
<dbReference type="EnsemblMetazoa" id="FBtr0075818">
    <property type="protein sequence ID" value="FBpp0075560"/>
    <property type="gene ID" value="FBgn0086785"/>
</dbReference>
<dbReference type="GeneID" id="39523"/>
<dbReference type="KEGG" id="dme:Dmel_CG10711"/>
<dbReference type="UCSC" id="CG10711-RA">
    <property type="organism name" value="d. melanogaster"/>
</dbReference>
<dbReference type="AGR" id="FB:FBgn0086785"/>
<dbReference type="CTD" id="51028"/>
<dbReference type="FlyBase" id="FBgn0086785">
    <property type="gene designation" value="Vps36"/>
</dbReference>
<dbReference type="VEuPathDB" id="VectorBase:FBgn0086785"/>
<dbReference type="eggNOG" id="KOG2760">
    <property type="taxonomic scope" value="Eukaryota"/>
</dbReference>
<dbReference type="GeneTree" id="ENSGT00390000017209"/>
<dbReference type="HOGENOM" id="CLU_015433_0_0_1"/>
<dbReference type="InParanoid" id="Q9VU87"/>
<dbReference type="OMA" id="TLNARVW"/>
<dbReference type="OrthoDB" id="271448at2759"/>
<dbReference type="PhylomeDB" id="Q9VU87"/>
<dbReference type="Reactome" id="R-DME-917729">
    <property type="pathway name" value="Endosomal Sorting Complex Required For Transport (ESCRT)"/>
</dbReference>
<dbReference type="BioGRID-ORCS" id="39523">
    <property type="hits" value="1 hit in 1 CRISPR screen"/>
</dbReference>
<dbReference type="GenomeRNAi" id="39523"/>
<dbReference type="PRO" id="PR:Q9VU87"/>
<dbReference type="Proteomes" id="UP000000803">
    <property type="component" value="Chromosome 3L"/>
</dbReference>
<dbReference type="Bgee" id="FBgn0086785">
    <property type="expression patterns" value="Expressed in adult posterior midgut class II enteroendocrine cell in adult midgut (Drosophila) and 45 other cell types or tissues"/>
</dbReference>
<dbReference type="GO" id="GO:0005737">
    <property type="term" value="C:cytoplasm"/>
    <property type="evidence" value="ECO:0000314"/>
    <property type="project" value="UniProtKB"/>
</dbReference>
<dbReference type="GO" id="GO:0005768">
    <property type="term" value="C:endosome"/>
    <property type="evidence" value="ECO:0000250"/>
    <property type="project" value="UniProtKB"/>
</dbReference>
<dbReference type="GO" id="GO:0000814">
    <property type="term" value="C:ESCRT II complex"/>
    <property type="evidence" value="ECO:0000250"/>
    <property type="project" value="FlyBase"/>
</dbReference>
<dbReference type="GO" id="GO:0031902">
    <property type="term" value="C:late endosome membrane"/>
    <property type="evidence" value="ECO:0000318"/>
    <property type="project" value="GO_Central"/>
</dbReference>
<dbReference type="GO" id="GO:0043025">
    <property type="term" value="C:neuronal cell body"/>
    <property type="evidence" value="ECO:0000314"/>
    <property type="project" value="FlyBase"/>
</dbReference>
<dbReference type="GO" id="GO:0003730">
    <property type="term" value="F:mRNA 3'-UTR binding"/>
    <property type="evidence" value="ECO:0000314"/>
    <property type="project" value="FlyBase"/>
</dbReference>
<dbReference type="GO" id="GO:0032266">
    <property type="term" value="F:phosphatidylinositol-3-phosphate binding"/>
    <property type="evidence" value="ECO:0007669"/>
    <property type="project" value="InterPro"/>
</dbReference>
<dbReference type="GO" id="GO:0043130">
    <property type="term" value="F:ubiquitin binding"/>
    <property type="evidence" value="ECO:0000250"/>
    <property type="project" value="FlyBase"/>
</dbReference>
<dbReference type="GO" id="GO:0045450">
    <property type="term" value="P:bicoid mRNA localization"/>
    <property type="evidence" value="ECO:0000315"/>
    <property type="project" value="UniProtKB"/>
</dbReference>
<dbReference type="GO" id="GO:0051028">
    <property type="term" value="P:mRNA transport"/>
    <property type="evidence" value="ECO:0007669"/>
    <property type="project" value="UniProtKB-KW"/>
</dbReference>
<dbReference type="GO" id="GO:0008104">
    <property type="term" value="P:protein localization"/>
    <property type="evidence" value="ECO:0000315"/>
    <property type="project" value="UniProtKB"/>
</dbReference>
<dbReference type="GO" id="GO:0043328">
    <property type="term" value="P:protein transport to vacuole involved in ubiquitin-dependent protein catabolic process via the multivesicular body sorting pathway"/>
    <property type="evidence" value="ECO:0000318"/>
    <property type="project" value="GO_Central"/>
</dbReference>
<dbReference type="GO" id="GO:0042981">
    <property type="term" value="P:regulation of apoptotic process"/>
    <property type="evidence" value="ECO:0000315"/>
    <property type="project" value="FlyBase"/>
</dbReference>
<dbReference type="GO" id="GO:0043162">
    <property type="term" value="P:ubiquitin-dependent protein catabolic process via the multivesicular body sorting pathway"/>
    <property type="evidence" value="ECO:0000315"/>
    <property type="project" value="FlyBase"/>
</dbReference>
<dbReference type="CDD" id="cd13226">
    <property type="entry name" value="PH-GRAM-like_Eap45"/>
    <property type="match status" value="1"/>
</dbReference>
<dbReference type="FunFam" id="1.10.10.10:FF:000170">
    <property type="entry name" value="Vacuolar protein-sorting-associated protein 36"/>
    <property type="match status" value="1"/>
</dbReference>
<dbReference type="FunFam" id="1.10.10.10:FF:000416">
    <property type="entry name" value="Vacuolar protein-sorting-associated protein 36"/>
    <property type="match status" value="1"/>
</dbReference>
<dbReference type="FunFam" id="2.30.29.30:FF:000550">
    <property type="entry name" value="Vacuolar protein-sorting-associated protein 36"/>
    <property type="match status" value="1"/>
</dbReference>
<dbReference type="Gene3D" id="6.10.140.260">
    <property type="match status" value="1"/>
</dbReference>
<dbReference type="Gene3D" id="2.30.29.30">
    <property type="entry name" value="Pleckstrin-homology domain (PH domain)/Phosphotyrosine-binding domain (PTB)"/>
    <property type="match status" value="1"/>
</dbReference>
<dbReference type="Gene3D" id="1.10.10.10">
    <property type="entry name" value="Winged helix-like DNA-binding domain superfamily/Winged helix DNA-binding domain"/>
    <property type="match status" value="2"/>
</dbReference>
<dbReference type="InterPro" id="IPR021648">
    <property type="entry name" value="GLUE_dom"/>
</dbReference>
<dbReference type="InterPro" id="IPR011993">
    <property type="entry name" value="PH-like_dom_sf"/>
</dbReference>
<dbReference type="InterPro" id="IPR040608">
    <property type="entry name" value="Snf8/Vps36"/>
</dbReference>
<dbReference type="InterPro" id="IPR037855">
    <property type="entry name" value="Vps36"/>
</dbReference>
<dbReference type="InterPro" id="IPR036388">
    <property type="entry name" value="WH-like_DNA-bd_sf"/>
</dbReference>
<dbReference type="InterPro" id="IPR036390">
    <property type="entry name" value="WH_DNA-bd_sf"/>
</dbReference>
<dbReference type="PANTHER" id="PTHR13128">
    <property type="entry name" value="VACUOLAR PROTEIN-SORTING-ASSOCIATED PROTEIN 36"/>
    <property type="match status" value="1"/>
</dbReference>
<dbReference type="PANTHER" id="PTHR13128:SF12">
    <property type="entry name" value="VACUOLAR PROTEIN-SORTING-ASSOCIATED PROTEIN 36"/>
    <property type="match status" value="1"/>
</dbReference>
<dbReference type="Pfam" id="PF04157">
    <property type="entry name" value="EAP30"/>
    <property type="match status" value="1"/>
</dbReference>
<dbReference type="Pfam" id="PF11605">
    <property type="entry name" value="Vps36_ESCRT-II"/>
    <property type="match status" value="1"/>
</dbReference>
<dbReference type="SUPFAM" id="SSF50729">
    <property type="entry name" value="PH domain-like"/>
    <property type="match status" value="1"/>
</dbReference>
<dbReference type="SUPFAM" id="SSF46785">
    <property type="entry name" value="Winged helix' DNA-binding domain"/>
    <property type="match status" value="2"/>
</dbReference>
<dbReference type="PROSITE" id="PS51495">
    <property type="entry name" value="GLUE"/>
    <property type="match status" value="1"/>
</dbReference>